<sequence length="164" mass="18307">MPLLDSFKVDHTKMPAPAVRLAKVMKTPKGDDISVFDLRFCVPNKDIMSEKGTHTLEHLFAGFMREHLNSNAVEIIDISPMGCRTGFYMSLIGTPDEKSVVKAWENSMQDVLKVKSQEDIPELNIYQCGSCKLHSLDEAKQIAQKVLNSGIGVMNNAELKLENL</sequence>
<protein>
    <recommendedName>
        <fullName evidence="1">S-ribosylhomocysteine lyase</fullName>
        <ecNumber evidence="1">4.4.1.21</ecNumber>
    </recommendedName>
    <alternativeName>
        <fullName evidence="1">AI-2 synthesis protein</fullName>
    </alternativeName>
    <alternativeName>
        <fullName evidence="1">Autoinducer-2 production protein LuxS</fullName>
    </alternativeName>
</protein>
<comment type="function">
    <text evidence="1">Involved in the synthesis of autoinducer 2 (AI-2) which is secreted by bacteria and is used to communicate both the cell density and the metabolic potential of the environment. The regulation of gene expression in response to changes in cell density is called quorum sensing. Catalyzes the transformation of S-ribosylhomocysteine (RHC) to homocysteine (HC) and 4,5-dihydroxy-2,3-pentadione (DPD).</text>
</comment>
<comment type="catalytic activity">
    <reaction evidence="1">
        <text>S-(5-deoxy-D-ribos-5-yl)-L-homocysteine = (S)-4,5-dihydroxypentane-2,3-dione + L-homocysteine</text>
        <dbReference type="Rhea" id="RHEA:17753"/>
        <dbReference type="ChEBI" id="CHEBI:29484"/>
        <dbReference type="ChEBI" id="CHEBI:58195"/>
        <dbReference type="ChEBI" id="CHEBI:58199"/>
        <dbReference type="EC" id="4.4.1.21"/>
    </reaction>
</comment>
<comment type="cofactor">
    <cofactor evidence="1">
        <name>Fe cation</name>
        <dbReference type="ChEBI" id="CHEBI:24875"/>
    </cofactor>
    <text evidence="1">Binds 1 Fe cation per subunit.</text>
</comment>
<comment type="subunit">
    <text evidence="1">Homodimer.</text>
</comment>
<comment type="similarity">
    <text evidence="1">Belongs to the LuxS family.</text>
</comment>
<gene>
    <name evidence="1" type="primary">luxS</name>
    <name type="ordered locus">JJD26997_0531</name>
</gene>
<keyword id="KW-0071">Autoinducer synthesis</keyword>
<keyword id="KW-0408">Iron</keyword>
<keyword id="KW-0456">Lyase</keyword>
<keyword id="KW-0479">Metal-binding</keyword>
<keyword id="KW-0673">Quorum sensing</keyword>
<evidence type="ECO:0000255" key="1">
    <source>
        <dbReference type="HAMAP-Rule" id="MF_00091"/>
    </source>
</evidence>
<feature type="chain" id="PRO_1000004841" description="S-ribosylhomocysteine lyase">
    <location>
        <begin position="1"/>
        <end position="164"/>
    </location>
</feature>
<feature type="binding site" evidence="1">
    <location>
        <position position="54"/>
    </location>
    <ligand>
        <name>Fe cation</name>
        <dbReference type="ChEBI" id="CHEBI:24875"/>
    </ligand>
</feature>
<feature type="binding site" evidence="1">
    <location>
        <position position="58"/>
    </location>
    <ligand>
        <name>Fe cation</name>
        <dbReference type="ChEBI" id="CHEBI:24875"/>
    </ligand>
</feature>
<feature type="binding site" evidence="1">
    <location>
        <position position="128"/>
    </location>
    <ligand>
        <name>Fe cation</name>
        <dbReference type="ChEBI" id="CHEBI:24875"/>
    </ligand>
</feature>
<dbReference type="EC" id="4.4.1.21" evidence="1"/>
<dbReference type="EMBL" id="CP000768">
    <property type="protein sequence ID" value="ABS44077.1"/>
    <property type="molecule type" value="Genomic_DNA"/>
</dbReference>
<dbReference type="SMR" id="A7H2H9"/>
<dbReference type="KEGG" id="cjd:JJD26997_0531"/>
<dbReference type="HOGENOM" id="CLU_107531_2_0_7"/>
<dbReference type="Proteomes" id="UP000002302">
    <property type="component" value="Chromosome"/>
</dbReference>
<dbReference type="GO" id="GO:0005506">
    <property type="term" value="F:iron ion binding"/>
    <property type="evidence" value="ECO:0007669"/>
    <property type="project" value="InterPro"/>
</dbReference>
<dbReference type="GO" id="GO:0043768">
    <property type="term" value="F:S-ribosylhomocysteine lyase activity"/>
    <property type="evidence" value="ECO:0007669"/>
    <property type="project" value="UniProtKB-UniRule"/>
</dbReference>
<dbReference type="GO" id="GO:0009372">
    <property type="term" value="P:quorum sensing"/>
    <property type="evidence" value="ECO:0007669"/>
    <property type="project" value="UniProtKB-UniRule"/>
</dbReference>
<dbReference type="Gene3D" id="3.30.1360.80">
    <property type="entry name" value="S-ribosylhomocysteinase (LuxS)"/>
    <property type="match status" value="1"/>
</dbReference>
<dbReference type="HAMAP" id="MF_00091">
    <property type="entry name" value="LuxS"/>
    <property type="match status" value="1"/>
</dbReference>
<dbReference type="InterPro" id="IPR037005">
    <property type="entry name" value="LuxS_sf"/>
</dbReference>
<dbReference type="InterPro" id="IPR011249">
    <property type="entry name" value="Metalloenz_LuxS/M16"/>
</dbReference>
<dbReference type="InterPro" id="IPR003815">
    <property type="entry name" value="S-ribosylhomocysteinase"/>
</dbReference>
<dbReference type="NCBIfam" id="NF002602">
    <property type="entry name" value="PRK02260.1-2"/>
    <property type="match status" value="1"/>
</dbReference>
<dbReference type="PANTHER" id="PTHR35799">
    <property type="entry name" value="S-RIBOSYLHOMOCYSTEINE LYASE"/>
    <property type="match status" value="1"/>
</dbReference>
<dbReference type="PANTHER" id="PTHR35799:SF1">
    <property type="entry name" value="S-RIBOSYLHOMOCYSTEINE LYASE"/>
    <property type="match status" value="1"/>
</dbReference>
<dbReference type="Pfam" id="PF02664">
    <property type="entry name" value="LuxS"/>
    <property type="match status" value="1"/>
</dbReference>
<dbReference type="PIRSF" id="PIRSF006160">
    <property type="entry name" value="AI2"/>
    <property type="match status" value="1"/>
</dbReference>
<dbReference type="PRINTS" id="PR01487">
    <property type="entry name" value="LUXSPROTEIN"/>
</dbReference>
<dbReference type="SUPFAM" id="SSF63411">
    <property type="entry name" value="LuxS/MPP-like metallohydrolase"/>
    <property type="match status" value="1"/>
</dbReference>
<accession>A7H2H9</accession>
<proteinExistence type="inferred from homology"/>
<name>LUXS_CAMJD</name>
<organism>
    <name type="scientific">Campylobacter jejuni subsp. doylei (strain ATCC BAA-1458 / RM4099 / 269.97)</name>
    <dbReference type="NCBI Taxonomy" id="360109"/>
    <lineage>
        <taxon>Bacteria</taxon>
        <taxon>Pseudomonadati</taxon>
        <taxon>Campylobacterota</taxon>
        <taxon>Epsilonproteobacteria</taxon>
        <taxon>Campylobacterales</taxon>
        <taxon>Campylobacteraceae</taxon>
        <taxon>Campylobacter</taxon>
    </lineage>
</organism>
<reference key="1">
    <citation type="submission" date="2007-07" db="EMBL/GenBank/DDBJ databases">
        <title>Complete genome sequence of Campylobacter jejuni subsp doylei 269.97 isolated from human blood.</title>
        <authorList>
            <person name="Fouts D.E."/>
            <person name="Mongodin E.F."/>
            <person name="Puiu D."/>
            <person name="Sebastian Y."/>
            <person name="Miller W.G."/>
            <person name="Mandrell R.E."/>
            <person name="Lastovica A.J."/>
            <person name="Nelson K.E."/>
        </authorList>
    </citation>
    <scope>NUCLEOTIDE SEQUENCE [LARGE SCALE GENOMIC DNA]</scope>
    <source>
        <strain>ATCC BAA-1458 / RM4099 / 269.97</strain>
    </source>
</reference>